<sequence>MRLTAKQITWLKVCLHLAGFLPLLWLFWAINHGGLSADPVKDIQHFTGRTALKFLLATLLVSPLARYAKQPLLIRTRRLLGLWCFVWATLHLTSYALLELGIHNLALLGSELISRPYLTLGIISWLVLLALTLTSTQFAQRKLGKRWQTLHNVVYLVAILAPIHYLWSVKILSPQPVIYATLALALLALRYRKFRQWWR</sequence>
<evidence type="ECO:0000255" key="1">
    <source>
        <dbReference type="HAMAP-Rule" id="MF_01207"/>
    </source>
</evidence>
<dbReference type="EMBL" id="CP001144">
    <property type="protein sequence ID" value="ACH77741.1"/>
    <property type="molecule type" value="Genomic_DNA"/>
</dbReference>
<dbReference type="RefSeq" id="WP_001240055.1">
    <property type="nucleotide sequence ID" value="NC_011205.1"/>
</dbReference>
<dbReference type="SMR" id="B5FIV6"/>
<dbReference type="KEGG" id="sed:SeD_A3738"/>
<dbReference type="HOGENOM" id="CLU_080662_1_0_6"/>
<dbReference type="Proteomes" id="UP000008322">
    <property type="component" value="Chromosome"/>
</dbReference>
<dbReference type="GO" id="GO:0005886">
    <property type="term" value="C:plasma membrane"/>
    <property type="evidence" value="ECO:0007669"/>
    <property type="project" value="UniProtKB-SubCell"/>
</dbReference>
<dbReference type="GO" id="GO:0009055">
    <property type="term" value="F:electron transfer activity"/>
    <property type="evidence" value="ECO:0007669"/>
    <property type="project" value="UniProtKB-UniRule"/>
</dbReference>
<dbReference type="GO" id="GO:0010181">
    <property type="term" value="F:FMN binding"/>
    <property type="evidence" value="ECO:0007669"/>
    <property type="project" value="UniProtKB-UniRule"/>
</dbReference>
<dbReference type="GO" id="GO:0020037">
    <property type="term" value="F:heme binding"/>
    <property type="evidence" value="ECO:0007669"/>
    <property type="project" value="UniProtKB-UniRule"/>
</dbReference>
<dbReference type="GO" id="GO:0046872">
    <property type="term" value="F:metal ion binding"/>
    <property type="evidence" value="ECO:0007669"/>
    <property type="project" value="UniProtKB-KW"/>
</dbReference>
<dbReference type="GO" id="GO:0016679">
    <property type="term" value="F:oxidoreductase activity, acting on diphenols and related substances as donors"/>
    <property type="evidence" value="ECO:0007669"/>
    <property type="project" value="TreeGrafter"/>
</dbReference>
<dbReference type="GO" id="GO:0030091">
    <property type="term" value="P:protein repair"/>
    <property type="evidence" value="ECO:0007669"/>
    <property type="project" value="UniProtKB-UniRule"/>
</dbReference>
<dbReference type="HAMAP" id="MF_01207">
    <property type="entry name" value="MsrQ"/>
    <property type="match status" value="1"/>
</dbReference>
<dbReference type="InterPro" id="IPR013130">
    <property type="entry name" value="Fe3_Rdtase_TM_dom"/>
</dbReference>
<dbReference type="InterPro" id="IPR022837">
    <property type="entry name" value="MsrQ-like"/>
</dbReference>
<dbReference type="NCBIfam" id="NF003831">
    <property type="entry name" value="PRK05419.1-2"/>
    <property type="match status" value="1"/>
</dbReference>
<dbReference type="NCBIfam" id="NF003832">
    <property type="entry name" value="PRK05419.1-4"/>
    <property type="match status" value="1"/>
</dbReference>
<dbReference type="PANTHER" id="PTHR36964">
    <property type="entry name" value="PROTEIN-METHIONINE-SULFOXIDE REDUCTASE HEME-BINDING SUBUNIT MSRQ"/>
    <property type="match status" value="1"/>
</dbReference>
<dbReference type="PANTHER" id="PTHR36964:SF1">
    <property type="entry name" value="PROTEIN-METHIONINE-SULFOXIDE REDUCTASE HEME-BINDING SUBUNIT MSRQ"/>
    <property type="match status" value="1"/>
</dbReference>
<dbReference type="Pfam" id="PF01794">
    <property type="entry name" value="Ferric_reduct"/>
    <property type="match status" value="1"/>
</dbReference>
<gene>
    <name evidence="1" type="primary">msrQ</name>
    <name type="ordered locus">SeD_A3738</name>
</gene>
<accession>B5FIV6</accession>
<protein>
    <recommendedName>
        <fullName evidence="1">Protein-methionine-sulfoxide reductase heme-binding subunit MsrQ</fullName>
    </recommendedName>
    <alternativeName>
        <fullName evidence="1">Flavocytochrome MsrQ</fullName>
    </alternativeName>
</protein>
<proteinExistence type="inferred from homology"/>
<name>MSRQ_SALDC</name>
<organism>
    <name type="scientific">Salmonella dublin (strain CT_02021853)</name>
    <dbReference type="NCBI Taxonomy" id="439851"/>
    <lineage>
        <taxon>Bacteria</taxon>
        <taxon>Pseudomonadati</taxon>
        <taxon>Pseudomonadota</taxon>
        <taxon>Gammaproteobacteria</taxon>
        <taxon>Enterobacterales</taxon>
        <taxon>Enterobacteriaceae</taxon>
        <taxon>Salmonella</taxon>
    </lineage>
</organism>
<comment type="function">
    <text evidence="1">Part of the MsrPQ system that repairs oxidized periplasmic proteins containing methionine sulfoxide residues (Met-O), using respiratory chain electrons. Thus protects these proteins from oxidative-stress damage caused by reactive species of oxygen and chlorine generated by the host defense mechanisms. MsrPQ is essential for the maintenance of envelope integrity under bleach stress, rescuing a wide series of structurally unrelated periplasmic proteins from methionine oxidation, including the primary periplasmic chaperone SurA and the lipoprotein Pal. MsrQ provides electrons for reduction to the reductase catalytic subunit MsrP, using the quinone pool of the respiratory chain.</text>
</comment>
<comment type="cofactor">
    <cofactor evidence="1">
        <name>FMN</name>
        <dbReference type="ChEBI" id="CHEBI:58210"/>
    </cofactor>
    <text evidence="1">Binds 1 FMN per subunit.</text>
</comment>
<comment type="cofactor">
    <cofactor evidence="1">
        <name>heme b</name>
        <dbReference type="ChEBI" id="CHEBI:60344"/>
    </cofactor>
    <text evidence="1">Binds 1 heme b (iron(II)-protoporphyrin IX) group per subunit.</text>
</comment>
<comment type="subunit">
    <text evidence="1">Heterodimer of a catalytic subunit (MsrP) and a heme-binding subunit (MsrQ).</text>
</comment>
<comment type="subcellular location">
    <subcellularLocation>
        <location evidence="1">Cell inner membrane</location>
        <topology evidence="1">Multi-pass membrane protein</topology>
    </subcellularLocation>
</comment>
<comment type="similarity">
    <text evidence="1">Belongs to the MsrQ family.</text>
</comment>
<keyword id="KW-0997">Cell inner membrane</keyword>
<keyword id="KW-1003">Cell membrane</keyword>
<keyword id="KW-0249">Electron transport</keyword>
<keyword id="KW-0285">Flavoprotein</keyword>
<keyword id="KW-0288">FMN</keyword>
<keyword id="KW-0349">Heme</keyword>
<keyword id="KW-0408">Iron</keyword>
<keyword id="KW-0472">Membrane</keyword>
<keyword id="KW-0479">Metal-binding</keyword>
<keyword id="KW-0812">Transmembrane</keyword>
<keyword id="KW-1133">Transmembrane helix</keyword>
<keyword id="KW-0813">Transport</keyword>
<feature type="chain" id="PRO_1000138741" description="Protein-methionine-sulfoxide reductase heme-binding subunit MsrQ">
    <location>
        <begin position="1"/>
        <end position="199"/>
    </location>
</feature>
<feature type="transmembrane region" description="Helical" evidence="1">
    <location>
        <begin position="10"/>
        <end position="30"/>
    </location>
</feature>
<feature type="transmembrane region" description="Helical" evidence="1">
    <location>
        <begin position="82"/>
        <end position="102"/>
    </location>
</feature>
<feature type="transmembrane region" description="Helical" evidence="1">
    <location>
        <begin position="116"/>
        <end position="136"/>
    </location>
</feature>
<feature type="transmembrane region" description="Helical" evidence="1">
    <location>
        <begin position="153"/>
        <end position="173"/>
    </location>
</feature>
<reference key="1">
    <citation type="journal article" date="2011" name="J. Bacteriol.">
        <title>Comparative genomics of 28 Salmonella enterica isolates: evidence for CRISPR-mediated adaptive sublineage evolution.</title>
        <authorList>
            <person name="Fricke W.F."/>
            <person name="Mammel M.K."/>
            <person name="McDermott P.F."/>
            <person name="Tartera C."/>
            <person name="White D.G."/>
            <person name="Leclerc J.E."/>
            <person name="Ravel J."/>
            <person name="Cebula T.A."/>
        </authorList>
    </citation>
    <scope>NUCLEOTIDE SEQUENCE [LARGE SCALE GENOMIC DNA]</scope>
    <source>
        <strain>CT_02021853</strain>
    </source>
</reference>